<comment type="similarity">
    <text evidence="1">Belongs to the UPF0301 (AlgH) family.</text>
</comment>
<gene>
    <name type="ordered locus">LPC_2717</name>
</gene>
<protein>
    <recommendedName>
        <fullName evidence="1">UPF0301 protein LPC_2717</fullName>
    </recommendedName>
</protein>
<reference key="1">
    <citation type="submission" date="2006-11" db="EMBL/GenBank/DDBJ databases">
        <title>Identification and characterization of a new conjugation/ type IVA secretion system (trb/tra) of L. pneumophila Corby localized on a mobile genomic island.</title>
        <authorList>
            <person name="Gloeckner G."/>
            <person name="Albert-Weissenberger C."/>
            <person name="Weinmann E."/>
            <person name="Jacobi S."/>
            <person name="Schunder E."/>
            <person name="Steinert M."/>
            <person name="Buchrieser C."/>
            <person name="Hacker J."/>
            <person name="Heuner K."/>
        </authorList>
    </citation>
    <scope>NUCLEOTIDE SEQUENCE [LARGE SCALE GENOMIC DNA]</scope>
    <source>
        <strain>Corby</strain>
    </source>
</reference>
<evidence type="ECO:0000255" key="1">
    <source>
        <dbReference type="HAMAP-Rule" id="MF_00758"/>
    </source>
</evidence>
<accession>A5IGX8</accession>
<sequence>MAIISSLANHLLIAMPSLKDPNFERSVVYLCEHNEQGSVGLIINRPLQFPLSIVFEQLQIEPIRVEKNGLPLLFGGPVQPERGFVIHKQMGGWRSSLFLQDEVTVTTSNDIIRAIAYDEGPKDVLITLGYAAWTEQQLEREIMSNTWLVCPYKSEILYEVPFEERWEYAGLTLGIKMNQLSSDAGHA</sequence>
<organism>
    <name type="scientific">Legionella pneumophila (strain Corby)</name>
    <dbReference type="NCBI Taxonomy" id="400673"/>
    <lineage>
        <taxon>Bacteria</taxon>
        <taxon>Pseudomonadati</taxon>
        <taxon>Pseudomonadota</taxon>
        <taxon>Gammaproteobacteria</taxon>
        <taxon>Legionellales</taxon>
        <taxon>Legionellaceae</taxon>
        <taxon>Legionella</taxon>
    </lineage>
</organism>
<name>Y2717_LEGPC</name>
<feature type="chain" id="PRO_1000046660" description="UPF0301 protein LPC_2717">
    <location>
        <begin position="1"/>
        <end position="187"/>
    </location>
</feature>
<proteinExistence type="inferred from homology"/>
<dbReference type="EMBL" id="CP000675">
    <property type="protein sequence ID" value="ABQ56628.1"/>
    <property type="molecule type" value="Genomic_DNA"/>
</dbReference>
<dbReference type="RefSeq" id="WP_010946323.1">
    <property type="nucleotide sequence ID" value="NC_009494.2"/>
</dbReference>
<dbReference type="SMR" id="A5IGX8"/>
<dbReference type="KEGG" id="lpc:LPC_2717"/>
<dbReference type="HOGENOM" id="CLU_057596_1_0_6"/>
<dbReference type="GO" id="GO:0005829">
    <property type="term" value="C:cytosol"/>
    <property type="evidence" value="ECO:0007669"/>
    <property type="project" value="TreeGrafter"/>
</dbReference>
<dbReference type="Gene3D" id="3.40.1740.10">
    <property type="entry name" value="VC0467-like"/>
    <property type="match status" value="1"/>
</dbReference>
<dbReference type="HAMAP" id="MF_00758">
    <property type="entry name" value="UPF0301"/>
    <property type="match status" value="1"/>
</dbReference>
<dbReference type="InterPro" id="IPR003774">
    <property type="entry name" value="AlgH-like"/>
</dbReference>
<dbReference type="NCBIfam" id="NF001266">
    <property type="entry name" value="PRK00228.1-1"/>
    <property type="match status" value="1"/>
</dbReference>
<dbReference type="PANTHER" id="PTHR30327">
    <property type="entry name" value="UNCHARACTERIZED PROTEIN YQGE"/>
    <property type="match status" value="1"/>
</dbReference>
<dbReference type="PANTHER" id="PTHR30327:SF1">
    <property type="entry name" value="UPF0301 PROTEIN YQGE"/>
    <property type="match status" value="1"/>
</dbReference>
<dbReference type="Pfam" id="PF02622">
    <property type="entry name" value="DUF179"/>
    <property type="match status" value="1"/>
</dbReference>
<dbReference type="SUPFAM" id="SSF143456">
    <property type="entry name" value="VC0467-like"/>
    <property type="match status" value="1"/>
</dbReference>